<gene>
    <name evidence="3" type="primary">lhpH</name>
    <name evidence="5" type="ordered locus">CPS_1453</name>
</gene>
<proteinExistence type="evidence at protein level"/>
<reference key="1">
    <citation type="journal article" date="2005" name="Proc. Natl. Acad. Sci. U.S.A.">
        <title>The psychrophilic lifestyle as revealed by the genome sequence of Colwellia psychrerythraea 34H through genomic and proteomic analyses.</title>
        <authorList>
            <person name="Methe B.A."/>
            <person name="Nelson K.E."/>
            <person name="Deming J.W."/>
            <person name="Momen B."/>
            <person name="Melamud E."/>
            <person name="Zhang X."/>
            <person name="Moult J."/>
            <person name="Madupu R."/>
            <person name="Nelson W.C."/>
            <person name="Dodson R.J."/>
            <person name="Brinkac L.M."/>
            <person name="Daugherty S.C."/>
            <person name="Durkin A.S."/>
            <person name="DeBoy R.T."/>
            <person name="Kolonay J.F."/>
            <person name="Sullivan S.A."/>
            <person name="Zhou L."/>
            <person name="Davidsen T.M."/>
            <person name="Wu M."/>
            <person name="Huston A.L."/>
            <person name="Lewis M."/>
            <person name="Weaver B."/>
            <person name="Weidman J.F."/>
            <person name="Khouri H."/>
            <person name="Utterback T.R."/>
            <person name="Feldblyum T.V."/>
            <person name="Fraser C.M."/>
        </authorList>
    </citation>
    <scope>NUCLEOTIDE SEQUENCE [LARGE SCALE GENOMIC DNA]</scope>
    <source>
        <strain>34H / ATCC BAA-681</strain>
    </source>
</reference>
<reference key="2">
    <citation type="journal article" date="2014" name="FEBS Open Bio">
        <title>Identification and characterization of trans-3-hydroxy-L-proline dehydratase and Delta(1)-pyrroline-2-carboxylate reductase involved in trans-3-hydroxy-L-proline metabolism of bacteria.</title>
        <authorList>
            <person name="Watanabe S."/>
            <person name="Tanimoto Y."/>
            <person name="Yamauchi S."/>
            <person name="Tozawa Y."/>
            <person name="Sawayama S."/>
            <person name="Watanabe Y."/>
        </authorList>
    </citation>
    <scope>FUNCTION</scope>
    <scope>CATALYTIC ACTIVITY</scope>
    <scope>SUBUNIT</scope>
    <scope>BIOPHYSICOCHEMICAL PROPERTIES</scope>
    <source>
        <strain>34H / ATCC BAA-681</strain>
    </source>
</reference>
<accession>Q485S0</accession>
<sequence length="355" mass="38956">MTKNIAQAAVKFEQWQPKIEQESYLTINSLECHTGGEPLRIITSGFPVLKGNTILAKANDCKQNYDQLRRALMFEPRGHADMYGAIITDAERDDSHFGAVFIHNEGYSSMCGHAVIALTKTAVESGVVARTGDVTQVVIDVPCGQIYAMAYSHNNVVKHVSFQCVPSFVYAKDQQVEVDGIGMVQFDIAYGGAFYAYVQASSLGLSLVPEQQEKLIAYGRKIKQAIIPQFEINHPTTAELSFLYGVIFIDDSPNQDVHSRNVCIFADGELDRSPTGSGVSGRIALHHAKQQIVLNETITIESILASSFSVRAIETVCFAGFDAVIPEVTGDAYVCGKGQWFINAEDPLKYGFLLR</sequence>
<dbReference type="EC" id="4.2.1.77" evidence="2"/>
<dbReference type="EMBL" id="CP000083">
    <property type="protein sequence ID" value="AAZ23960.1"/>
    <property type="molecule type" value="Genomic_DNA"/>
</dbReference>
<dbReference type="RefSeq" id="WP_011042289.1">
    <property type="nucleotide sequence ID" value="NC_003910.7"/>
</dbReference>
<dbReference type="SMR" id="Q485S0"/>
<dbReference type="STRING" id="167879.CPS_1453"/>
<dbReference type="KEGG" id="cps:CPS_1453"/>
<dbReference type="HOGENOM" id="CLU_036729_0_0_6"/>
<dbReference type="BRENDA" id="1.5.1.49">
    <property type="organism ID" value="8143"/>
</dbReference>
<dbReference type="BRENDA" id="4.2.1.77">
    <property type="organism ID" value="8143"/>
</dbReference>
<dbReference type="Proteomes" id="UP000000547">
    <property type="component" value="Chromosome"/>
</dbReference>
<dbReference type="GO" id="GO:0047580">
    <property type="term" value="F:4-hydroxyproline epimerase activity"/>
    <property type="evidence" value="ECO:0007669"/>
    <property type="project" value="TreeGrafter"/>
</dbReference>
<dbReference type="GO" id="GO:0050346">
    <property type="term" value="F:trans-L-3-hydroxyproline dehydratase activity"/>
    <property type="evidence" value="ECO:0007669"/>
    <property type="project" value="UniProtKB-EC"/>
</dbReference>
<dbReference type="FunFam" id="3.10.310.10:FF:000003">
    <property type="entry name" value="Proline racemase"/>
    <property type="match status" value="1"/>
</dbReference>
<dbReference type="Gene3D" id="3.10.310.10">
    <property type="entry name" value="Diaminopimelate Epimerase, Chain A, domain 1"/>
    <property type="match status" value="2"/>
</dbReference>
<dbReference type="InterPro" id="IPR008794">
    <property type="entry name" value="Pro_racemase_fam"/>
</dbReference>
<dbReference type="PANTHER" id="PTHR33442">
    <property type="entry name" value="TRANS-3-HYDROXY-L-PROLINE DEHYDRATASE"/>
    <property type="match status" value="1"/>
</dbReference>
<dbReference type="PANTHER" id="PTHR33442:SF1">
    <property type="entry name" value="TRANS-3-HYDROXY-L-PROLINE DEHYDRATASE"/>
    <property type="match status" value="1"/>
</dbReference>
<dbReference type="Pfam" id="PF05544">
    <property type="entry name" value="Pro_racemase"/>
    <property type="match status" value="1"/>
</dbReference>
<dbReference type="PIRSF" id="PIRSF029792">
    <property type="entry name" value="Pro_racemase"/>
    <property type="match status" value="1"/>
</dbReference>
<dbReference type="SFLD" id="SFLDS00028">
    <property type="entry name" value="Proline_Racemase"/>
    <property type="match status" value="1"/>
</dbReference>
<dbReference type="SUPFAM" id="SSF54506">
    <property type="entry name" value="Diaminopimelate epimerase-like"/>
    <property type="match status" value="1"/>
</dbReference>
<protein>
    <recommendedName>
        <fullName evidence="3">Trans-3-hydroxy-L-proline dehydratase</fullName>
        <shortName evidence="3">T3LHyp dehydratase</shortName>
        <shortName>t3HypD</shortName>
        <ecNumber evidence="2">4.2.1.77</ecNumber>
    </recommendedName>
    <alternativeName>
        <fullName>Trans-L-3-hydroxyproline dehydratase</fullName>
    </alternativeName>
</protein>
<evidence type="ECO:0000250" key="1">
    <source>
        <dbReference type="UniProtKB" id="Q4KGU2"/>
    </source>
</evidence>
<evidence type="ECO:0000269" key="2">
    <source>
    </source>
</evidence>
<evidence type="ECO:0000303" key="3">
    <source>
    </source>
</evidence>
<evidence type="ECO:0000305" key="4"/>
<evidence type="ECO:0000312" key="5">
    <source>
        <dbReference type="EMBL" id="AAZ23960.1"/>
    </source>
</evidence>
<comment type="function">
    <text evidence="2">Catalyzes the dehydration of trans-3-hydroxy-L-proline (t3LHyp) to Delta(1)-pyrroline-2-carboxylate (Pyr2C). Together with LhpI, is involved in a metabolic pathway that converts t3LHyp to L-proline.</text>
</comment>
<comment type="catalytic activity">
    <reaction evidence="2">
        <text>trans-3-hydroxy-L-proline = 1-pyrroline-2-carboxylate + H2O</text>
        <dbReference type="Rhea" id="RHEA:10320"/>
        <dbReference type="ChEBI" id="CHEBI:15377"/>
        <dbReference type="ChEBI" id="CHEBI:39785"/>
        <dbReference type="ChEBI" id="CHEBI:57938"/>
        <dbReference type="EC" id="4.2.1.77"/>
    </reaction>
</comment>
<comment type="biophysicochemical properties">
    <phDependence>
        <text evidence="2">Optimum pH is 8.0-9.5.</text>
    </phDependence>
</comment>
<comment type="subunit">
    <text evidence="2">Homodimer.</text>
</comment>
<comment type="similarity">
    <text evidence="4">Belongs to the proline racemase family.</text>
</comment>
<name>T3HPD_COLP3</name>
<keyword id="KW-0456">Lyase</keyword>
<organism>
    <name type="scientific">Colwellia psychrerythraea (strain 34H / ATCC BAA-681)</name>
    <name type="common">Vibrio psychroerythus</name>
    <dbReference type="NCBI Taxonomy" id="167879"/>
    <lineage>
        <taxon>Bacteria</taxon>
        <taxon>Pseudomonadati</taxon>
        <taxon>Pseudomonadota</taxon>
        <taxon>Gammaproteobacteria</taxon>
        <taxon>Alteromonadales</taxon>
        <taxon>Colwelliaceae</taxon>
        <taxon>Colwellia</taxon>
    </lineage>
</organism>
<feature type="chain" id="PRO_0000432242" description="Trans-3-hydroxy-L-proline dehydratase">
    <location>
        <begin position="1"/>
        <end position="355"/>
    </location>
</feature>
<feature type="active site" description="Proton acceptor" evidence="1">
    <location>
        <position position="111"/>
    </location>
</feature>
<feature type="binding site" evidence="1">
    <location>
        <begin position="112"/>
        <end position="113"/>
    </location>
    <ligand>
        <name>substrate</name>
    </ligand>
</feature>
<feature type="binding site" evidence="1">
    <location>
        <begin position="276"/>
        <end position="277"/>
    </location>
    <ligand>
        <name>substrate</name>
    </ligand>
</feature>